<organism>
    <name type="scientific">Bacillus cereus (strain 03BB102)</name>
    <dbReference type="NCBI Taxonomy" id="572264"/>
    <lineage>
        <taxon>Bacteria</taxon>
        <taxon>Bacillati</taxon>
        <taxon>Bacillota</taxon>
        <taxon>Bacilli</taxon>
        <taxon>Bacillales</taxon>
        <taxon>Bacillaceae</taxon>
        <taxon>Bacillus</taxon>
        <taxon>Bacillus cereus group</taxon>
    </lineage>
</organism>
<dbReference type="EC" id="5.4.2.10" evidence="1"/>
<dbReference type="EMBL" id="CP001407">
    <property type="protein sequence ID" value="ACO30108.1"/>
    <property type="molecule type" value="Genomic_DNA"/>
</dbReference>
<dbReference type="RefSeq" id="WP_000521474.1">
    <property type="nucleotide sequence ID" value="NZ_CP009318.1"/>
</dbReference>
<dbReference type="SMR" id="C1EU11"/>
<dbReference type="GeneID" id="75083449"/>
<dbReference type="KEGG" id="bcx:BCA_0199"/>
<dbReference type="PATRIC" id="fig|572264.18.peg.221"/>
<dbReference type="Proteomes" id="UP000002210">
    <property type="component" value="Chromosome"/>
</dbReference>
<dbReference type="GO" id="GO:0005829">
    <property type="term" value="C:cytosol"/>
    <property type="evidence" value="ECO:0007669"/>
    <property type="project" value="TreeGrafter"/>
</dbReference>
<dbReference type="GO" id="GO:0000287">
    <property type="term" value="F:magnesium ion binding"/>
    <property type="evidence" value="ECO:0007669"/>
    <property type="project" value="UniProtKB-UniRule"/>
</dbReference>
<dbReference type="GO" id="GO:0008966">
    <property type="term" value="F:phosphoglucosamine mutase activity"/>
    <property type="evidence" value="ECO:0007669"/>
    <property type="project" value="UniProtKB-UniRule"/>
</dbReference>
<dbReference type="GO" id="GO:0004615">
    <property type="term" value="F:phosphomannomutase activity"/>
    <property type="evidence" value="ECO:0007669"/>
    <property type="project" value="TreeGrafter"/>
</dbReference>
<dbReference type="GO" id="GO:0005975">
    <property type="term" value="P:carbohydrate metabolic process"/>
    <property type="evidence" value="ECO:0007669"/>
    <property type="project" value="InterPro"/>
</dbReference>
<dbReference type="GO" id="GO:0009252">
    <property type="term" value="P:peptidoglycan biosynthetic process"/>
    <property type="evidence" value="ECO:0007669"/>
    <property type="project" value="TreeGrafter"/>
</dbReference>
<dbReference type="GO" id="GO:0006048">
    <property type="term" value="P:UDP-N-acetylglucosamine biosynthetic process"/>
    <property type="evidence" value="ECO:0007669"/>
    <property type="project" value="TreeGrafter"/>
</dbReference>
<dbReference type="CDD" id="cd05802">
    <property type="entry name" value="GlmM"/>
    <property type="match status" value="1"/>
</dbReference>
<dbReference type="FunFam" id="3.30.310.50:FF:000001">
    <property type="entry name" value="Phosphoglucosamine mutase"/>
    <property type="match status" value="1"/>
</dbReference>
<dbReference type="FunFam" id="3.40.120.10:FF:000001">
    <property type="entry name" value="Phosphoglucosamine mutase"/>
    <property type="match status" value="1"/>
</dbReference>
<dbReference type="FunFam" id="3.40.120.10:FF:000002">
    <property type="entry name" value="Phosphoglucosamine mutase"/>
    <property type="match status" value="1"/>
</dbReference>
<dbReference type="Gene3D" id="3.40.120.10">
    <property type="entry name" value="Alpha-D-Glucose-1,6-Bisphosphate, subunit A, domain 3"/>
    <property type="match status" value="3"/>
</dbReference>
<dbReference type="Gene3D" id="3.30.310.50">
    <property type="entry name" value="Alpha-D-phosphohexomutase, C-terminal domain"/>
    <property type="match status" value="1"/>
</dbReference>
<dbReference type="HAMAP" id="MF_01554_B">
    <property type="entry name" value="GlmM_B"/>
    <property type="match status" value="1"/>
</dbReference>
<dbReference type="InterPro" id="IPR005844">
    <property type="entry name" value="A-D-PHexomutase_a/b/a-I"/>
</dbReference>
<dbReference type="InterPro" id="IPR016055">
    <property type="entry name" value="A-D-PHexomutase_a/b/a-I/II/III"/>
</dbReference>
<dbReference type="InterPro" id="IPR005845">
    <property type="entry name" value="A-D-PHexomutase_a/b/a-II"/>
</dbReference>
<dbReference type="InterPro" id="IPR005846">
    <property type="entry name" value="A-D-PHexomutase_a/b/a-III"/>
</dbReference>
<dbReference type="InterPro" id="IPR005843">
    <property type="entry name" value="A-D-PHexomutase_C"/>
</dbReference>
<dbReference type="InterPro" id="IPR036900">
    <property type="entry name" value="A-D-PHexomutase_C_sf"/>
</dbReference>
<dbReference type="InterPro" id="IPR016066">
    <property type="entry name" value="A-D-PHexomutase_CS"/>
</dbReference>
<dbReference type="InterPro" id="IPR005841">
    <property type="entry name" value="Alpha-D-phosphohexomutase_SF"/>
</dbReference>
<dbReference type="InterPro" id="IPR006352">
    <property type="entry name" value="GlmM_bact"/>
</dbReference>
<dbReference type="InterPro" id="IPR050060">
    <property type="entry name" value="Phosphoglucosamine_mutase"/>
</dbReference>
<dbReference type="NCBIfam" id="TIGR01455">
    <property type="entry name" value="glmM"/>
    <property type="match status" value="1"/>
</dbReference>
<dbReference type="NCBIfam" id="NF008139">
    <property type="entry name" value="PRK10887.1"/>
    <property type="match status" value="1"/>
</dbReference>
<dbReference type="PANTHER" id="PTHR42946:SF1">
    <property type="entry name" value="PHOSPHOGLUCOMUTASE (ALPHA-D-GLUCOSE-1,6-BISPHOSPHATE-DEPENDENT)"/>
    <property type="match status" value="1"/>
</dbReference>
<dbReference type="PANTHER" id="PTHR42946">
    <property type="entry name" value="PHOSPHOHEXOSE MUTASE"/>
    <property type="match status" value="1"/>
</dbReference>
<dbReference type="Pfam" id="PF02878">
    <property type="entry name" value="PGM_PMM_I"/>
    <property type="match status" value="1"/>
</dbReference>
<dbReference type="Pfam" id="PF02879">
    <property type="entry name" value="PGM_PMM_II"/>
    <property type="match status" value="1"/>
</dbReference>
<dbReference type="Pfam" id="PF02880">
    <property type="entry name" value="PGM_PMM_III"/>
    <property type="match status" value="1"/>
</dbReference>
<dbReference type="Pfam" id="PF00408">
    <property type="entry name" value="PGM_PMM_IV"/>
    <property type="match status" value="1"/>
</dbReference>
<dbReference type="PRINTS" id="PR00509">
    <property type="entry name" value="PGMPMM"/>
</dbReference>
<dbReference type="SUPFAM" id="SSF55957">
    <property type="entry name" value="Phosphoglucomutase, C-terminal domain"/>
    <property type="match status" value="1"/>
</dbReference>
<dbReference type="SUPFAM" id="SSF53738">
    <property type="entry name" value="Phosphoglucomutase, first 3 domains"/>
    <property type="match status" value="3"/>
</dbReference>
<dbReference type="PROSITE" id="PS00710">
    <property type="entry name" value="PGM_PMM"/>
    <property type="match status" value="1"/>
</dbReference>
<keyword id="KW-0413">Isomerase</keyword>
<keyword id="KW-0460">Magnesium</keyword>
<keyword id="KW-0479">Metal-binding</keyword>
<keyword id="KW-0597">Phosphoprotein</keyword>
<reference key="1">
    <citation type="submission" date="2009-02" db="EMBL/GenBank/DDBJ databases">
        <title>Genome sequence of Bacillus cereus 03BB102.</title>
        <authorList>
            <person name="Dodson R.J."/>
            <person name="Jackson P."/>
            <person name="Munk A.C."/>
            <person name="Brettin T."/>
            <person name="Bruce D."/>
            <person name="Detter C."/>
            <person name="Tapia R."/>
            <person name="Han C."/>
            <person name="Sutton G."/>
            <person name="Sims D."/>
        </authorList>
    </citation>
    <scope>NUCLEOTIDE SEQUENCE [LARGE SCALE GENOMIC DNA]</scope>
    <source>
        <strain>03BB102</strain>
    </source>
</reference>
<feature type="chain" id="PRO_1000185350" description="Phosphoglucosamine mutase">
    <location>
        <begin position="1"/>
        <end position="448"/>
    </location>
</feature>
<feature type="active site" description="Phosphoserine intermediate" evidence="1">
    <location>
        <position position="100"/>
    </location>
</feature>
<feature type="binding site" description="via phosphate group" evidence="1">
    <location>
        <position position="100"/>
    </location>
    <ligand>
        <name>Mg(2+)</name>
        <dbReference type="ChEBI" id="CHEBI:18420"/>
    </ligand>
</feature>
<feature type="binding site" evidence="1">
    <location>
        <position position="240"/>
    </location>
    <ligand>
        <name>Mg(2+)</name>
        <dbReference type="ChEBI" id="CHEBI:18420"/>
    </ligand>
</feature>
<feature type="binding site" evidence="1">
    <location>
        <position position="242"/>
    </location>
    <ligand>
        <name>Mg(2+)</name>
        <dbReference type="ChEBI" id="CHEBI:18420"/>
    </ligand>
</feature>
<feature type="binding site" evidence="1">
    <location>
        <position position="244"/>
    </location>
    <ligand>
        <name>Mg(2+)</name>
        <dbReference type="ChEBI" id="CHEBI:18420"/>
    </ligand>
</feature>
<feature type="modified residue" description="Phosphoserine" evidence="1">
    <location>
        <position position="100"/>
    </location>
</feature>
<comment type="function">
    <text evidence="1">Catalyzes the conversion of glucosamine-6-phosphate to glucosamine-1-phosphate.</text>
</comment>
<comment type="catalytic activity">
    <reaction evidence="1">
        <text>alpha-D-glucosamine 1-phosphate = D-glucosamine 6-phosphate</text>
        <dbReference type="Rhea" id="RHEA:23424"/>
        <dbReference type="ChEBI" id="CHEBI:58516"/>
        <dbReference type="ChEBI" id="CHEBI:58725"/>
        <dbReference type="EC" id="5.4.2.10"/>
    </reaction>
</comment>
<comment type="cofactor">
    <cofactor evidence="1">
        <name>Mg(2+)</name>
        <dbReference type="ChEBI" id="CHEBI:18420"/>
    </cofactor>
    <text evidence="1">Binds 1 Mg(2+) ion per subunit.</text>
</comment>
<comment type="PTM">
    <text evidence="1">Activated by phosphorylation.</text>
</comment>
<comment type="similarity">
    <text evidence="1">Belongs to the phosphohexose mutase family.</text>
</comment>
<gene>
    <name evidence="1" type="primary">glmM</name>
    <name type="ordered locus">BCA_0199</name>
</gene>
<protein>
    <recommendedName>
        <fullName evidence="1">Phosphoglucosamine mutase</fullName>
        <ecNumber evidence="1">5.4.2.10</ecNumber>
    </recommendedName>
</protein>
<proteinExistence type="inferred from homology"/>
<name>GLMM_BACC3</name>
<sequence length="448" mass="48417">MGKYFGTDGVRGVANKELTPELAFKIGRFGGYVLTKDTDRPKVIIGRDTRISGHMLEGALVAGLLSTGAEVMRLGVISTPGVAYLTKALDAQAGVMISASHNPVQDNGIKFFGSDGFKLTDEQEAEIEALLDKEVDELPRPTGTNLGQVSDYFEGGQKYLQYIKQTVEEDFSGLHIALDCAHGATSSLAPYLFADLEADISTMGTSPNGMNINDGVGSTHPEVLAELVKEKGADIGLAFDGDGDRLIAVDEKGNIVDGDQIMFICAKYMKETGQLKHNTVVSTVMSNLGFYKALEANGITSDKTAVGDRYVMEEMKRGGYNLGGEQSGHIILLDYITTGDGMLSALQLVNIMKMTKKPLSELAGEMTKFPQLLVNVRVTDKKLALENEKIKEIIRVVEEEMNGDGRILVRPSGTEPLIRVMAEAPTQEVCDAYVHRIVEVVKAEVGAE</sequence>
<evidence type="ECO:0000255" key="1">
    <source>
        <dbReference type="HAMAP-Rule" id="MF_01554"/>
    </source>
</evidence>
<accession>C1EU11</accession>